<proteinExistence type="inferred from homology"/>
<reference key="1">
    <citation type="submission" date="2006-08" db="EMBL/GenBank/DDBJ databases">
        <title>Complete sequence of chromosome 1 of Burkholderia cepacia AMMD.</title>
        <authorList>
            <person name="Copeland A."/>
            <person name="Lucas S."/>
            <person name="Lapidus A."/>
            <person name="Barry K."/>
            <person name="Detter J.C."/>
            <person name="Glavina del Rio T."/>
            <person name="Hammon N."/>
            <person name="Israni S."/>
            <person name="Pitluck S."/>
            <person name="Bruce D."/>
            <person name="Chain P."/>
            <person name="Malfatti S."/>
            <person name="Shin M."/>
            <person name="Vergez L."/>
            <person name="Schmutz J."/>
            <person name="Larimer F."/>
            <person name="Land M."/>
            <person name="Hauser L."/>
            <person name="Kyrpides N."/>
            <person name="Kim E."/>
            <person name="Parke J."/>
            <person name="Coenye T."/>
            <person name="Konstantinidis K."/>
            <person name="Ramette A."/>
            <person name="Tiedje J."/>
            <person name="Richardson P."/>
        </authorList>
    </citation>
    <scope>NUCLEOTIDE SEQUENCE [LARGE SCALE GENOMIC DNA]</scope>
    <source>
        <strain>ATCC BAA-244 / DSM 16087 / CCUG 44356 / LMG 19182 / AMMD</strain>
    </source>
</reference>
<gene>
    <name evidence="1" type="primary">hemC</name>
    <name type="ordered locus">Bamb_2468</name>
</gene>
<keyword id="KW-0627">Porphyrin biosynthesis</keyword>
<keyword id="KW-0808">Transferase</keyword>
<sequence length="328" mass="34713">MNSETISAQAPATLTIASRESRLAMWQAEHVRDALRKLYPACDVKILGMTTRGDQILDRTLSKVGGKGLFVKELENALADGRADLAVHSLKDVPMALPDGFALTAIMEREDPRDAFVSNDYASLDALPAGAVVGTSSLRREAMLRARYPHLDVLPLRGNLDTRLAKLDRGDYAAIILAAAGLKRLGLEARIRTLIDVEDSPPAAGQGALGIEIATHRTDVAAWLAPLHDPRTALAVEAERMVSRALGGSCEVPLAAHAVWRAGELYLTGRVSTTDGQRVLTAEECGAVMTVADALALGRAVSDELEAQGALDIVNALLAASQAGKGDA</sequence>
<feature type="chain" id="PRO_0000304218" description="Porphobilinogen deaminase">
    <location>
        <begin position="1"/>
        <end position="328"/>
    </location>
</feature>
<feature type="modified residue" description="S-(dipyrrolylmethanemethyl)cysteine" evidence="1">
    <location>
        <position position="250"/>
    </location>
</feature>
<comment type="function">
    <text evidence="1">Tetrapolymerization of the monopyrrole PBG into the hydroxymethylbilane pre-uroporphyrinogen in several discrete steps.</text>
</comment>
<comment type="catalytic activity">
    <reaction evidence="1">
        <text>4 porphobilinogen + H2O = hydroxymethylbilane + 4 NH4(+)</text>
        <dbReference type="Rhea" id="RHEA:13185"/>
        <dbReference type="ChEBI" id="CHEBI:15377"/>
        <dbReference type="ChEBI" id="CHEBI:28938"/>
        <dbReference type="ChEBI" id="CHEBI:57845"/>
        <dbReference type="ChEBI" id="CHEBI:58126"/>
        <dbReference type="EC" id="2.5.1.61"/>
    </reaction>
</comment>
<comment type="cofactor">
    <cofactor evidence="1">
        <name>dipyrromethane</name>
        <dbReference type="ChEBI" id="CHEBI:60342"/>
    </cofactor>
    <text evidence="1">Binds 1 dipyrromethane group covalently.</text>
</comment>
<comment type="pathway">
    <text evidence="1">Porphyrin-containing compound metabolism; protoporphyrin-IX biosynthesis; coproporphyrinogen-III from 5-aminolevulinate: step 2/4.</text>
</comment>
<comment type="subunit">
    <text evidence="1">Monomer.</text>
</comment>
<comment type="miscellaneous">
    <text evidence="1">The porphobilinogen subunits are added to the dipyrromethane group.</text>
</comment>
<comment type="similarity">
    <text evidence="1">Belongs to the HMBS family.</text>
</comment>
<dbReference type="EC" id="2.5.1.61" evidence="1"/>
<dbReference type="EMBL" id="CP000440">
    <property type="protein sequence ID" value="ABI88024.1"/>
    <property type="molecule type" value="Genomic_DNA"/>
</dbReference>
<dbReference type="RefSeq" id="WP_011657639.1">
    <property type="nucleotide sequence ID" value="NC_008390.1"/>
</dbReference>
<dbReference type="SMR" id="Q0BCU9"/>
<dbReference type="GeneID" id="93085326"/>
<dbReference type="KEGG" id="bam:Bamb_2468"/>
<dbReference type="eggNOG" id="COG0181">
    <property type="taxonomic scope" value="Bacteria"/>
</dbReference>
<dbReference type="UniPathway" id="UPA00251">
    <property type="reaction ID" value="UER00319"/>
</dbReference>
<dbReference type="Proteomes" id="UP000000662">
    <property type="component" value="Chromosome 1"/>
</dbReference>
<dbReference type="GO" id="GO:0005737">
    <property type="term" value="C:cytoplasm"/>
    <property type="evidence" value="ECO:0007669"/>
    <property type="project" value="TreeGrafter"/>
</dbReference>
<dbReference type="GO" id="GO:0004418">
    <property type="term" value="F:hydroxymethylbilane synthase activity"/>
    <property type="evidence" value="ECO:0007669"/>
    <property type="project" value="UniProtKB-UniRule"/>
</dbReference>
<dbReference type="GO" id="GO:0006782">
    <property type="term" value="P:protoporphyrinogen IX biosynthetic process"/>
    <property type="evidence" value="ECO:0007669"/>
    <property type="project" value="UniProtKB-UniRule"/>
</dbReference>
<dbReference type="CDD" id="cd13646">
    <property type="entry name" value="PBP2_EcHMBS_like"/>
    <property type="match status" value="1"/>
</dbReference>
<dbReference type="FunFam" id="3.40.190.10:FF:000004">
    <property type="entry name" value="Porphobilinogen deaminase"/>
    <property type="match status" value="1"/>
</dbReference>
<dbReference type="FunFam" id="3.40.190.10:FF:000005">
    <property type="entry name" value="Porphobilinogen deaminase"/>
    <property type="match status" value="1"/>
</dbReference>
<dbReference type="Gene3D" id="3.40.190.10">
    <property type="entry name" value="Periplasmic binding protein-like II"/>
    <property type="match status" value="2"/>
</dbReference>
<dbReference type="Gene3D" id="3.30.160.40">
    <property type="entry name" value="Porphobilinogen deaminase, C-terminal domain"/>
    <property type="match status" value="1"/>
</dbReference>
<dbReference type="HAMAP" id="MF_00260">
    <property type="entry name" value="Porphobil_deam"/>
    <property type="match status" value="1"/>
</dbReference>
<dbReference type="InterPro" id="IPR000860">
    <property type="entry name" value="HemC"/>
</dbReference>
<dbReference type="InterPro" id="IPR022419">
    <property type="entry name" value="Porphobilin_deaminase_cofac_BS"/>
</dbReference>
<dbReference type="InterPro" id="IPR022417">
    <property type="entry name" value="Porphobilin_deaminase_N"/>
</dbReference>
<dbReference type="InterPro" id="IPR022418">
    <property type="entry name" value="Porphobilinogen_deaminase_C"/>
</dbReference>
<dbReference type="InterPro" id="IPR036803">
    <property type="entry name" value="Porphobilinogen_deaminase_C_sf"/>
</dbReference>
<dbReference type="NCBIfam" id="TIGR00212">
    <property type="entry name" value="hemC"/>
    <property type="match status" value="1"/>
</dbReference>
<dbReference type="PANTHER" id="PTHR11557">
    <property type="entry name" value="PORPHOBILINOGEN DEAMINASE"/>
    <property type="match status" value="1"/>
</dbReference>
<dbReference type="PANTHER" id="PTHR11557:SF0">
    <property type="entry name" value="PORPHOBILINOGEN DEAMINASE"/>
    <property type="match status" value="1"/>
</dbReference>
<dbReference type="Pfam" id="PF01379">
    <property type="entry name" value="Porphobil_deam"/>
    <property type="match status" value="1"/>
</dbReference>
<dbReference type="Pfam" id="PF03900">
    <property type="entry name" value="Porphobil_deamC"/>
    <property type="match status" value="1"/>
</dbReference>
<dbReference type="PIRSF" id="PIRSF001438">
    <property type="entry name" value="4pyrrol_synth_OHMeBilane_synth"/>
    <property type="match status" value="1"/>
</dbReference>
<dbReference type="PRINTS" id="PR00151">
    <property type="entry name" value="PORPHBDMNASE"/>
</dbReference>
<dbReference type="SUPFAM" id="SSF53850">
    <property type="entry name" value="Periplasmic binding protein-like II"/>
    <property type="match status" value="1"/>
</dbReference>
<dbReference type="SUPFAM" id="SSF54782">
    <property type="entry name" value="Porphobilinogen deaminase (hydroxymethylbilane synthase), C-terminal domain"/>
    <property type="match status" value="1"/>
</dbReference>
<dbReference type="PROSITE" id="PS00533">
    <property type="entry name" value="PORPHOBILINOGEN_DEAM"/>
    <property type="match status" value="1"/>
</dbReference>
<accession>Q0BCU9</accession>
<evidence type="ECO:0000255" key="1">
    <source>
        <dbReference type="HAMAP-Rule" id="MF_00260"/>
    </source>
</evidence>
<name>HEM3_BURCM</name>
<protein>
    <recommendedName>
        <fullName evidence="1">Porphobilinogen deaminase</fullName>
        <shortName evidence="1">PBG</shortName>
        <ecNumber evidence="1">2.5.1.61</ecNumber>
    </recommendedName>
    <alternativeName>
        <fullName evidence="1">Hydroxymethylbilane synthase</fullName>
        <shortName evidence="1">HMBS</shortName>
    </alternativeName>
    <alternativeName>
        <fullName evidence="1">Pre-uroporphyrinogen synthase</fullName>
    </alternativeName>
</protein>
<organism>
    <name type="scientific">Burkholderia ambifaria (strain ATCC BAA-244 / DSM 16087 / CCUG 44356 / LMG 19182 / AMMD)</name>
    <name type="common">Burkholderia cepacia (strain AMMD)</name>
    <dbReference type="NCBI Taxonomy" id="339670"/>
    <lineage>
        <taxon>Bacteria</taxon>
        <taxon>Pseudomonadati</taxon>
        <taxon>Pseudomonadota</taxon>
        <taxon>Betaproteobacteria</taxon>
        <taxon>Burkholderiales</taxon>
        <taxon>Burkholderiaceae</taxon>
        <taxon>Burkholderia</taxon>
        <taxon>Burkholderia cepacia complex</taxon>
    </lineage>
</organism>